<evidence type="ECO:0000250" key="1"/>
<evidence type="ECO:0000250" key="2">
    <source>
        <dbReference type="UniProtKB" id="P00157"/>
    </source>
</evidence>
<evidence type="ECO:0000255" key="3">
    <source>
        <dbReference type="PROSITE-ProRule" id="PRU00967"/>
    </source>
</evidence>
<evidence type="ECO:0000255" key="4">
    <source>
        <dbReference type="PROSITE-ProRule" id="PRU00968"/>
    </source>
</evidence>
<dbReference type="EMBL" id="AF395475">
    <property type="protein sequence ID" value="AAL65896.1"/>
    <property type="status" value="ALT_SEQ"/>
    <property type="molecule type" value="Genomic_DNA"/>
</dbReference>
<dbReference type="EMBL" id="AF395476">
    <property type="protein sequence ID" value="AAL65897.1"/>
    <property type="molecule type" value="Genomic_DNA"/>
</dbReference>
<dbReference type="EMBL" id="AF395477">
    <property type="protein sequence ID" value="AAL65898.1"/>
    <property type="molecule type" value="Genomic_DNA"/>
</dbReference>
<dbReference type="EMBL" id="AF395478">
    <property type="protein sequence ID" value="AAL65899.2"/>
    <property type="molecule type" value="Genomic_DNA"/>
</dbReference>
<dbReference type="EMBL" id="AF395479">
    <property type="protein sequence ID" value="AAL65900.1"/>
    <property type="molecule type" value="Genomic_DNA"/>
</dbReference>
<dbReference type="EMBL" id="AF395480">
    <property type="protein sequence ID" value="AAL65901.2"/>
    <property type="molecule type" value="Genomic_DNA"/>
</dbReference>
<dbReference type="EMBL" id="AF395481">
    <property type="protein sequence ID" value="AAL65902.2"/>
    <property type="molecule type" value="Genomic_DNA"/>
</dbReference>
<dbReference type="EMBL" id="AF395482">
    <property type="protein sequence ID" value="AAL65903.2"/>
    <property type="molecule type" value="Genomic_DNA"/>
</dbReference>
<dbReference type="SMR" id="Q8W822"/>
<dbReference type="GO" id="GO:0005743">
    <property type="term" value="C:mitochondrial inner membrane"/>
    <property type="evidence" value="ECO:0007669"/>
    <property type="project" value="UniProtKB-SubCell"/>
</dbReference>
<dbReference type="GO" id="GO:0045275">
    <property type="term" value="C:respiratory chain complex III"/>
    <property type="evidence" value="ECO:0007669"/>
    <property type="project" value="InterPro"/>
</dbReference>
<dbReference type="GO" id="GO:0046872">
    <property type="term" value="F:metal ion binding"/>
    <property type="evidence" value="ECO:0007669"/>
    <property type="project" value="UniProtKB-KW"/>
</dbReference>
<dbReference type="GO" id="GO:0008121">
    <property type="term" value="F:ubiquinol-cytochrome-c reductase activity"/>
    <property type="evidence" value="ECO:0007669"/>
    <property type="project" value="InterPro"/>
</dbReference>
<dbReference type="GO" id="GO:0006122">
    <property type="term" value="P:mitochondrial electron transport, ubiquinol to cytochrome c"/>
    <property type="evidence" value="ECO:0007669"/>
    <property type="project" value="TreeGrafter"/>
</dbReference>
<dbReference type="CDD" id="cd00290">
    <property type="entry name" value="cytochrome_b_C"/>
    <property type="match status" value="1"/>
</dbReference>
<dbReference type="CDD" id="cd00284">
    <property type="entry name" value="Cytochrome_b_N"/>
    <property type="match status" value="1"/>
</dbReference>
<dbReference type="FunFam" id="1.20.810.10:FF:000002">
    <property type="entry name" value="Cytochrome b"/>
    <property type="match status" value="1"/>
</dbReference>
<dbReference type="Gene3D" id="1.20.810.10">
    <property type="entry name" value="Cytochrome Bc1 Complex, Chain C"/>
    <property type="match status" value="1"/>
</dbReference>
<dbReference type="InterPro" id="IPR005798">
    <property type="entry name" value="Cyt_b/b6_C"/>
</dbReference>
<dbReference type="InterPro" id="IPR036150">
    <property type="entry name" value="Cyt_b/b6_C_sf"/>
</dbReference>
<dbReference type="InterPro" id="IPR005797">
    <property type="entry name" value="Cyt_b/b6_N"/>
</dbReference>
<dbReference type="InterPro" id="IPR027387">
    <property type="entry name" value="Cytb/b6-like_sf"/>
</dbReference>
<dbReference type="InterPro" id="IPR030689">
    <property type="entry name" value="Cytochrome_b"/>
</dbReference>
<dbReference type="InterPro" id="IPR048260">
    <property type="entry name" value="Cytochrome_b_C_euk/bac"/>
</dbReference>
<dbReference type="InterPro" id="IPR048259">
    <property type="entry name" value="Cytochrome_b_N_euk/bac"/>
</dbReference>
<dbReference type="InterPro" id="IPR016174">
    <property type="entry name" value="Di-haem_cyt_TM"/>
</dbReference>
<dbReference type="PANTHER" id="PTHR19271">
    <property type="entry name" value="CYTOCHROME B"/>
    <property type="match status" value="1"/>
</dbReference>
<dbReference type="PANTHER" id="PTHR19271:SF16">
    <property type="entry name" value="CYTOCHROME B"/>
    <property type="match status" value="1"/>
</dbReference>
<dbReference type="Pfam" id="PF00032">
    <property type="entry name" value="Cytochrom_B_C"/>
    <property type="match status" value="1"/>
</dbReference>
<dbReference type="Pfam" id="PF00033">
    <property type="entry name" value="Cytochrome_B"/>
    <property type="match status" value="1"/>
</dbReference>
<dbReference type="PIRSF" id="PIRSF038885">
    <property type="entry name" value="COB"/>
    <property type="match status" value="1"/>
</dbReference>
<dbReference type="SUPFAM" id="SSF81648">
    <property type="entry name" value="a domain/subunit of cytochrome bc1 complex (Ubiquinol-cytochrome c reductase)"/>
    <property type="match status" value="1"/>
</dbReference>
<dbReference type="SUPFAM" id="SSF81342">
    <property type="entry name" value="Transmembrane di-heme cytochromes"/>
    <property type="match status" value="1"/>
</dbReference>
<dbReference type="PROSITE" id="PS51003">
    <property type="entry name" value="CYTB_CTER"/>
    <property type="match status" value="1"/>
</dbReference>
<dbReference type="PROSITE" id="PS51002">
    <property type="entry name" value="CYTB_NTER"/>
    <property type="match status" value="1"/>
</dbReference>
<feature type="chain" id="PRO_0000060677" description="Cytochrome b">
    <location>
        <begin position="1"/>
        <end position="379"/>
    </location>
</feature>
<feature type="transmembrane region" description="Helical" evidence="2">
    <location>
        <begin position="33"/>
        <end position="53"/>
    </location>
</feature>
<feature type="transmembrane region" description="Helical" evidence="2">
    <location>
        <begin position="77"/>
        <end position="98"/>
    </location>
</feature>
<feature type="transmembrane region" description="Helical" evidence="2">
    <location>
        <begin position="113"/>
        <end position="133"/>
    </location>
</feature>
<feature type="transmembrane region" description="Helical" evidence="2">
    <location>
        <begin position="178"/>
        <end position="198"/>
    </location>
</feature>
<feature type="transmembrane region" description="Helical" evidence="2">
    <location>
        <begin position="226"/>
        <end position="246"/>
    </location>
</feature>
<feature type="transmembrane region" description="Helical" evidence="2">
    <location>
        <begin position="288"/>
        <end position="308"/>
    </location>
</feature>
<feature type="transmembrane region" description="Helical" evidence="2">
    <location>
        <begin position="320"/>
        <end position="340"/>
    </location>
</feature>
<feature type="transmembrane region" description="Helical" evidence="2">
    <location>
        <begin position="347"/>
        <end position="367"/>
    </location>
</feature>
<feature type="binding site" description="axial binding residue" evidence="2">
    <location>
        <position position="83"/>
    </location>
    <ligand>
        <name>heme b</name>
        <dbReference type="ChEBI" id="CHEBI:60344"/>
        <label>b562</label>
    </ligand>
    <ligandPart>
        <name>Fe</name>
        <dbReference type="ChEBI" id="CHEBI:18248"/>
    </ligandPart>
</feature>
<feature type="binding site" description="axial binding residue" evidence="2">
    <location>
        <position position="97"/>
    </location>
    <ligand>
        <name>heme b</name>
        <dbReference type="ChEBI" id="CHEBI:60344"/>
        <label>b566</label>
    </ligand>
    <ligandPart>
        <name>Fe</name>
        <dbReference type="ChEBI" id="CHEBI:18248"/>
    </ligandPart>
</feature>
<feature type="binding site" description="axial binding residue" evidence="2">
    <location>
        <position position="182"/>
    </location>
    <ligand>
        <name>heme b</name>
        <dbReference type="ChEBI" id="CHEBI:60344"/>
        <label>b562</label>
    </ligand>
    <ligandPart>
        <name>Fe</name>
        <dbReference type="ChEBI" id="CHEBI:18248"/>
    </ligandPart>
</feature>
<feature type="binding site" description="axial binding residue" evidence="2">
    <location>
        <position position="196"/>
    </location>
    <ligand>
        <name>heme b</name>
        <dbReference type="ChEBI" id="CHEBI:60344"/>
        <label>b566</label>
    </ligand>
    <ligandPart>
        <name>Fe</name>
        <dbReference type="ChEBI" id="CHEBI:18248"/>
    </ligandPart>
</feature>
<feature type="binding site" evidence="2">
    <location>
        <position position="201"/>
    </location>
    <ligand>
        <name>a ubiquinone</name>
        <dbReference type="ChEBI" id="CHEBI:16389"/>
    </ligand>
</feature>
<feature type="sequence variant" description="In strain: Isolate 1119hy.">
    <original>S</original>
    <variation>M</variation>
    <location>
        <position position="16"/>
    </location>
</feature>
<feature type="sequence variant" description="In strain: Isolate 1119hy.">
    <original>P</original>
    <variation>K</variation>
    <location>
        <position position="319"/>
    </location>
</feature>
<proteinExistence type="inferred from homology"/>
<reference key="1">
    <citation type="journal article" date="2002" name="Mol. Phylogenet. Evol.">
        <title>Molecular phylogeny of short-tailed shrews, Blarina (Insectivora; Soricidae).</title>
        <authorList>
            <person name="Brant S.V."/>
            <person name="Orti G."/>
        </authorList>
    </citation>
    <scope>NUCLEOTIDE SEQUENCE [GENOMIC DNA]</scope>
    <source>
        <strain>Isolate 1064hy</strain>
        <strain>Isolate 1119hy</strain>
        <strain>Isolate 1124hy</strain>
        <strain>Isolate 1180hy</strain>
    </source>
</reference>
<sequence length="379" mass="42618">MTNIRKTHPLMKIINSSFIDLPAPSNISSWWNFGSLLGICLIIQILTGLFLAMHYTSDTVTAFSSVTHICRDVNYGWLIRYLHANGASMFFICLFLHVGRGLYYGSYMFLETWNIGVLLLFAVMATAFMGYVLPWGQMSFWGATVITNLLSAIPYIGSDLVQWIWGGFSVDKATLTRFFAFHFILPFVIAALAGVHLLFLHETGSNNPSGLASDADKIPFHPYYTIKDILGVLILILVLTCLVLFSPDLLGDPDNYTPANPLNTPPHIKPEWYFLFAYAILRSIPNKLGGVLALVLSILILAFIPLLHTSKQRSMMFRPFSQCLFWILVADLLTLTWIGGQPVEHPFIIIGQLASILYFLLLLVIMPITSLFENNLLKW</sequence>
<comment type="function">
    <text evidence="2">Component of the ubiquinol-cytochrome c reductase complex (complex III or cytochrome b-c1 complex) that is part of the mitochondrial respiratory chain. The b-c1 complex mediates electron transfer from ubiquinol to cytochrome c. Contributes to the generation of a proton gradient across the mitochondrial membrane that is then used for ATP synthesis.</text>
</comment>
<comment type="cofactor">
    <cofactor evidence="2">
        <name>heme b</name>
        <dbReference type="ChEBI" id="CHEBI:60344"/>
    </cofactor>
    <text evidence="2">Binds 2 heme b groups non-covalently.</text>
</comment>
<comment type="subunit">
    <text evidence="2">The cytochrome bc1 complex contains 11 subunits: 3 respiratory subunits (MT-CYB, CYC1 and UQCRFS1), 2 core proteins (UQCRC1 and UQCRC2) and 6 low-molecular weight proteins (UQCRH/QCR6, UQCRB/QCR7, UQCRQ/QCR8, UQCR10/QCR9, UQCR11/QCR10 and a cleavage product of UQCRFS1). This cytochrome bc1 complex then forms a dimer.</text>
</comment>
<comment type="subcellular location">
    <subcellularLocation>
        <location evidence="2">Mitochondrion inner membrane</location>
        <topology evidence="2">Multi-pass membrane protein</topology>
    </subcellularLocation>
</comment>
<comment type="miscellaneous">
    <text evidence="1">Heme 1 (or BL or b562) is low-potential and absorbs at about 562 nm, and heme 2 (or BH or b566) is high-potential and absorbs at about 566 nm.</text>
</comment>
<comment type="similarity">
    <text evidence="3 4">Belongs to the cytochrome b family.</text>
</comment>
<comment type="caution">
    <text evidence="2">The full-length protein contains only eight transmembrane helices, not nine as predicted by bioinformatics tools.</text>
</comment>
<organism>
    <name type="scientific">Blarina hylophaga</name>
    <name type="common">Elliot's short-tailed shrew</name>
    <dbReference type="NCBI Taxonomy" id="183659"/>
    <lineage>
        <taxon>Eukaryota</taxon>
        <taxon>Metazoa</taxon>
        <taxon>Chordata</taxon>
        <taxon>Craniata</taxon>
        <taxon>Vertebrata</taxon>
        <taxon>Euteleostomi</taxon>
        <taxon>Mammalia</taxon>
        <taxon>Eutheria</taxon>
        <taxon>Laurasiatheria</taxon>
        <taxon>Eulipotyphla</taxon>
        <taxon>Soricidae</taxon>
        <taxon>Soricinae</taxon>
        <taxon>Blarina</taxon>
    </lineage>
</organism>
<protein>
    <recommendedName>
        <fullName>Cytochrome b</fullName>
    </recommendedName>
    <alternativeName>
        <fullName>Complex III subunit 3</fullName>
    </alternativeName>
    <alternativeName>
        <fullName>Complex III subunit III</fullName>
    </alternativeName>
    <alternativeName>
        <fullName>Cytochrome b-c1 complex subunit 3</fullName>
    </alternativeName>
    <alternativeName>
        <fullName>Ubiquinol-cytochrome-c reductase complex cytochrome b subunit</fullName>
    </alternativeName>
</protein>
<geneLocation type="mitochondrion"/>
<name>CYB_BLAHY</name>
<gene>
    <name type="primary">MT-CYB</name>
    <name type="synonym">COB</name>
    <name type="synonym">CYTB</name>
    <name type="synonym">MTCYB</name>
</gene>
<accession>Q8W822</accession>
<accession>Q8WCJ8</accession>
<accession>Q8WCJ9</accession>
<accession>Q8WCK0</accession>
<accession>Q8WCK1</accession>
<accession>Q8WCK2</accession>
<accession>Q8WCK3</accession>
<keyword id="KW-0249">Electron transport</keyword>
<keyword id="KW-0349">Heme</keyword>
<keyword id="KW-0408">Iron</keyword>
<keyword id="KW-0472">Membrane</keyword>
<keyword id="KW-0479">Metal-binding</keyword>
<keyword id="KW-0496">Mitochondrion</keyword>
<keyword id="KW-0999">Mitochondrion inner membrane</keyword>
<keyword id="KW-0679">Respiratory chain</keyword>
<keyword id="KW-0812">Transmembrane</keyword>
<keyword id="KW-1133">Transmembrane helix</keyword>
<keyword id="KW-0813">Transport</keyword>
<keyword id="KW-0830">Ubiquinone</keyword>